<protein>
    <recommendedName>
        <fullName evidence="1">ATP synthase subunit delta</fullName>
    </recommendedName>
    <alternativeName>
        <fullName evidence="1">ATP synthase F(1) sector subunit delta</fullName>
    </alternativeName>
    <alternativeName>
        <fullName evidence="1">F-type ATPase subunit delta</fullName>
        <shortName evidence="1">F-ATPase subunit delta</shortName>
    </alternativeName>
</protein>
<organism>
    <name type="scientific">Listeria monocytogenes serotype 4b (strain CLIP80459)</name>
    <dbReference type="NCBI Taxonomy" id="568819"/>
    <lineage>
        <taxon>Bacteria</taxon>
        <taxon>Bacillati</taxon>
        <taxon>Bacillota</taxon>
        <taxon>Bacilli</taxon>
        <taxon>Bacillales</taxon>
        <taxon>Listeriaceae</taxon>
        <taxon>Listeria</taxon>
    </lineage>
</organism>
<sequence length="179" mass="20261">MSKDLEVAGRYANALFQVAQDKDLVDVFSEELTELKAALKANEDFVKLLENPTFTTEQKKNLASAVFEKINPTLRDFIYLLIDRSREDYLSVIADVYQKRVNDLNGVADADVYSVVPLSEQELTALSRVFATKMNKTKLNIQNHIDKSLLGGVKVVIGTRIYDDSLKTKLKDMERQIKA</sequence>
<proteinExistence type="inferred from homology"/>
<keyword id="KW-0066">ATP synthesis</keyword>
<keyword id="KW-1003">Cell membrane</keyword>
<keyword id="KW-0139">CF(1)</keyword>
<keyword id="KW-0375">Hydrogen ion transport</keyword>
<keyword id="KW-0406">Ion transport</keyword>
<keyword id="KW-0472">Membrane</keyword>
<keyword id="KW-0813">Transport</keyword>
<dbReference type="EMBL" id="FM242711">
    <property type="protein sequence ID" value="CAS06256.1"/>
    <property type="molecule type" value="Genomic_DNA"/>
</dbReference>
<dbReference type="RefSeq" id="WP_003734489.1">
    <property type="nucleotide sequence ID" value="NC_012488.1"/>
</dbReference>
<dbReference type="SMR" id="C1KYU9"/>
<dbReference type="KEGG" id="lmc:Lm4b_02501"/>
<dbReference type="HOGENOM" id="CLU_085114_1_1_9"/>
<dbReference type="GO" id="GO:0005886">
    <property type="term" value="C:plasma membrane"/>
    <property type="evidence" value="ECO:0007669"/>
    <property type="project" value="UniProtKB-SubCell"/>
</dbReference>
<dbReference type="GO" id="GO:0045259">
    <property type="term" value="C:proton-transporting ATP synthase complex"/>
    <property type="evidence" value="ECO:0007669"/>
    <property type="project" value="UniProtKB-KW"/>
</dbReference>
<dbReference type="GO" id="GO:0046933">
    <property type="term" value="F:proton-transporting ATP synthase activity, rotational mechanism"/>
    <property type="evidence" value="ECO:0007669"/>
    <property type="project" value="UniProtKB-UniRule"/>
</dbReference>
<dbReference type="Gene3D" id="1.10.520.20">
    <property type="entry name" value="N-terminal domain of the delta subunit of the F1F0-ATP synthase"/>
    <property type="match status" value="1"/>
</dbReference>
<dbReference type="HAMAP" id="MF_01416">
    <property type="entry name" value="ATP_synth_delta_bact"/>
    <property type="match status" value="1"/>
</dbReference>
<dbReference type="InterPro" id="IPR026015">
    <property type="entry name" value="ATP_synth_OSCP/delta_N_sf"/>
</dbReference>
<dbReference type="InterPro" id="IPR000711">
    <property type="entry name" value="ATPase_OSCP/dsu"/>
</dbReference>
<dbReference type="NCBIfam" id="TIGR01145">
    <property type="entry name" value="ATP_synt_delta"/>
    <property type="match status" value="1"/>
</dbReference>
<dbReference type="NCBIfam" id="NF004403">
    <property type="entry name" value="PRK05758.2-4"/>
    <property type="match status" value="1"/>
</dbReference>
<dbReference type="PANTHER" id="PTHR11910">
    <property type="entry name" value="ATP SYNTHASE DELTA CHAIN"/>
    <property type="match status" value="1"/>
</dbReference>
<dbReference type="Pfam" id="PF00213">
    <property type="entry name" value="OSCP"/>
    <property type="match status" value="1"/>
</dbReference>
<dbReference type="PRINTS" id="PR00125">
    <property type="entry name" value="ATPASEDELTA"/>
</dbReference>
<dbReference type="SUPFAM" id="SSF47928">
    <property type="entry name" value="N-terminal domain of the delta subunit of the F1F0-ATP synthase"/>
    <property type="match status" value="1"/>
</dbReference>
<gene>
    <name evidence="1" type="primary">atpH</name>
    <name type="ordered locus">Lm4b_02501</name>
</gene>
<feature type="chain" id="PRO_0000382115" description="ATP synthase subunit delta">
    <location>
        <begin position="1"/>
        <end position="179"/>
    </location>
</feature>
<accession>C1KYU9</accession>
<evidence type="ECO:0000255" key="1">
    <source>
        <dbReference type="HAMAP-Rule" id="MF_01416"/>
    </source>
</evidence>
<reference key="1">
    <citation type="journal article" date="2012" name="BMC Genomics">
        <title>Comparative genomics and transcriptomics of lineages I, II, and III strains of Listeria monocytogenes.</title>
        <authorList>
            <person name="Hain T."/>
            <person name="Ghai R."/>
            <person name="Billion A."/>
            <person name="Kuenne C.T."/>
            <person name="Steinweg C."/>
            <person name="Izar B."/>
            <person name="Mohamed W."/>
            <person name="Mraheil M."/>
            <person name="Domann E."/>
            <person name="Schaffrath S."/>
            <person name="Karst U."/>
            <person name="Goesmann A."/>
            <person name="Oehm S."/>
            <person name="Puhler A."/>
            <person name="Merkl R."/>
            <person name="Vorwerk S."/>
            <person name="Glaser P."/>
            <person name="Garrido P."/>
            <person name="Rusniok C."/>
            <person name="Buchrieser C."/>
            <person name="Goebel W."/>
            <person name="Chakraborty T."/>
        </authorList>
    </citation>
    <scope>NUCLEOTIDE SEQUENCE [LARGE SCALE GENOMIC DNA]</scope>
    <source>
        <strain>CLIP80459</strain>
    </source>
</reference>
<name>ATPD_LISMC</name>
<comment type="function">
    <text evidence="1">F(1)F(0) ATP synthase produces ATP from ADP in the presence of a proton or sodium gradient. F-type ATPases consist of two structural domains, F(1) containing the extramembraneous catalytic core and F(0) containing the membrane proton channel, linked together by a central stalk and a peripheral stalk. During catalysis, ATP synthesis in the catalytic domain of F(1) is coupled via a rotary mechanism of the central stalk subunits to proton translocation.</text>
</comment>
<comment type="function">
    <text evidence="1">This protein is part of the stalk that links CF(0) to CF(1). It either transmits conformational changes from CF(0) to CF(1) or is implicated in proton conduction.</text>
</comment>
<comment type="subunit">
    <text evidence="1">F-type ATPases have 2 components, F(1) - the catalytic core - and F(0) - the membrane proton channel. F(1) has five subunits: alpha(3), beta(3), gamma(1), delta(1), epsilon(1). F(0) has three main subunits: a(1), b(2) and c(10-14). The alpha and beta chains form an alternating ring which encloses part of the gamma chain. F(1) is attached to F(0) by a central stalk formed by the gamma and epsilon chains, while a peripheral stalk is formed by the delta and b chains.</text>
</comment>
<comment type="subcellular location">
    <subcellularLocation>
        <location evidence="1">Cell membrane</location>
        <topology evidence="1">Peripheral membrane protein</topology>
    </subcellularLocation>
</comment>
<comment type="similarity">
    <text evidence="1">Belongs to the ATPase delta chain family.</text>
</comment>